<name>DUT_PSYWF</name>
<organism>
    <name type="scientific">Psychrobacter sp. (strain PRwf-1)</name>
    <dbReference type="NCBI Taxonomy" id="349106"/>
    <lineage>
        <taxon>Bacteria</taxon>
        <taxon>Pseudomonadati</taxon>
        <taxon>Pseudomonadota</taxon>
        <taxon>Gammaproteobacteria</taxon>
        <taxon>Moraxellales</taxon>
        <taxon>Moraxellaceae</taxon>
        <taxon>Psychrobacter</taxon>
    </lineage>
</organism>
<gene>
    <name evidence="1" type="primary">dut</name>
    <name type="ordered locus">PsycPRwf_1826</name>
</gene>
<comment type="function">
    <text evidence="1">This enzyme is involved in nucleotide metabolism: it produces dUMP, the immediate precursor of thymidine nucleotides and it decreases the intracellular concentration of dUTP so that uracil cannot be incorporated into DNA.</text>
</comment>
<comment type="catalytic activity">
    <reaction evidence="1">
        <text>dUTP + H2O = dUMP + diphosphate + H(+)</text>
        <dbReference type="Rhea" id="RHEA:10248"/>
        <dbReference type="ChEBI" id="CHEBI:15377"/>
        <dbReference type="ChEBI" id="CHEBI:15378"/>
        <dbReference type="ChEBI" id="CHEBI:33019"/>
        <dbReference type="ChEBI" id="CHEBI:61555"/>
        <dbReference type="ChEBI" id="CHEBI:246422"/>
        <dbReference type="EC" id="3.6.1.23"/>
    </reaction>
</comment>
<comment type="cofactor">
    <cofactor evidence="1">
        <name>Mg(2+)</name>
        <dbReference type="ChEBI" id="CHEBI:18420"/>
    </cofactor>
</comment>
<comment type="pathway">
    <text evidence="1">Pyrimidine metabolism; dUMP biosynthesis; dUMP from dCTP (dUTP route): step 2/2.</text>
</comment>
<comment type="similarity">
    <text evidence="1">Belongs to the dUTPase family.</text>
</comment>
<keyword id="KW-0378">Hydrolase</keyword>
<keyword id="KW-0460">Magnesium</keyword>
<keyword id="KW-0479">Metal-binding</keyword>
<keyword id="KW-0546">Nucleotide metabolism</keyword>
<accession>A5WGH5</accession>
<feature type="chain" id="PRO_1000071355" description="Deoxyuridine 5'-triphosphate nucleotidohydrolase">
    <location>
        <begin position="1"/>
        <end position="154"/>
    </location>
</feature>
<feature type="binding site" evidence="1">
    <location>
        <begin position="72"/>
        <end position="74"/>
    </location>
    <ligand>
        <name>substrate</name>
    </ligand>
</feature>
<feature type="binding site" evidence="1">
    <location>
        <position position="85"/>
    </location>
    <ligand>
        <name>substrate</name>
    </ligand>
</feature>
<feature type="binding site" evidence="1">
    <location>
        <begin position="89"/>
        <end position="91"/>
    </location>
    <ligand>
        <name>substrate</name>
    </ligand>
</feature>
<feature type="binding site" evidence="1">
    <location>
        <position position="99"/>
    </location>
    <ligand>
        <name>substrate</name>
    </ligand>
</feature>
<evidence type="ECO:0000255" key="1">
    <source>
        <dbReference type="HAMAP-Rule" id="MF_00116"/>
    </source>
</evidence>
<dbReference type="EC" id="3.6.1.23" evidence="1"/>
<dbReference type="EMBL" id="CP000713">
    <property type="protein sequence ID" value="ABQ94766.1"/>
    <property type="molecule type" value="Genomic_DNA"/>
</dbReference>
<dbReference type="SMR" id="A5WGH5"/>
<dbReference type="STRING" id="349106.PsycPRwf_1826"/>
<dbReference type="KEGG" id="prw:PsycPRwf_1826"/>
<dbReference type="eggNOG" id="COG0756">
    <property type="taxonomic scope" value="Bacteria"/>
</dbReference>
<dbReference type="HOGENOM" id="CLU_068508_1_1_6"/>
<dbReference type="UniPathway" id="UPA00610">
    <property type="reaction ID" value="UER00666"/>
</dbReference>
<dbReference type="GO" id="GO:0004170">
    <property type="term" value="F:dUTP diphosphatase activity"/>
    <property type="evidence" value="ECO:0007669"/>
    <property type="project" value="UniProtKB-UniRule"/>
</dbReference>
<dbReference type="GO" id="GO:0000287">
    <property type="term" value="F:magnesium ion binding"/>
    <property type="evidence" value="ECO:0007669"/>
    <property type="project" value="UniProtKB-UniRule"/>
</dbReference>
<dbReference type="GO" id="GO:0006226">
    <property type="term" value="P:dUMP biosynthetic process"/>
    <property type="evidence" value="ECO:0007669"/>
    <property type="project" value="UniProtKB-UniRule"/>
</dbReference>
<dbReference type="GO" id="GO:0046081">
    <property type="term" value="P:dUTP catabolic process"/>
    <property type="evidence" value="ECO:0007669"/>
    <property type="project" value="InterPro"/>
</dbReference>
<dbReference type="CDD" id="cd07557">
    <property type="entry name" value="trimeric_dUTPase"/>
    <property type="match status" value="1"/>
</dbReference>
<dbReference type="FunFam" id="2.70.40.10:FF:000002">
    <property type="entry name" value="dUTP diphosphatase"/>
    <property type="match status" value="1"/>
</dbReference>
<dbReference type="Gene3D" id="2.70.40.10">
    <property type="match status" value="1"/>
</dbReference>
<dbReference type="HAMAP" id="MF_00116">
    <property type="entry name" value="dUTPase_bact"/>
    <property type="match status" value="1"/>
</dbReference>
<dbReference type="InterPro" id="IPR008181">
    <property type="entry name" value="dUTPase"/>
</dbReference>
<dbReference type="InterPro" id="IPR029054">
    <property type="entry name" value="dUTPase-like"/>
</dbReference>
<dbReference type="InterPro" id="IPR036157">
    <property type="entry name" value="dUTPase-like_sf"/>
</dbReference>
<dbReference type="InterPro" id="IPR033704">
    <property type="entry name" value="dUTPase_trimeric"/>
</dbReference>
<dbReference type="NCBIfam" id="TIGR00576">
    <property type="entry name" value="dut"/>
    <property type="match status" value="1"/>
</dbReference>
<dbReference type="NCBIfam" id="NF001862">
    <property type="entry name" value="PRK00601.1"/>
    <property type="match status" value="1"/>
</dbReference>
<dbReference type="PANTHER" id="PTHR11241">
    <property type="entry name" value="DEOXYURIDINE 5'-TRIPHOSPHATE NUCLEOTIDOHYDROLASE"/>
    <property type="match status" value="1"/>
</dbReference>
<dbReference type="PANTHER" id="PTHR11241:SF0">
    <property type="entry name" value="DEOXYURIDINE 5'-TRIPHOSPHATE NUCLEOTIDOHYDROLASE"/>
    <property type="match status" value="1"/>
</dbReference>
<dbReference type="Pfam" id="PF00692">
    <property type="entry name" value="dUTPase"/>
    <property type="match status" value="1"/>
</dbReference>
<dbReference type="SUPFAM" id="SSF51283">
    <property type="entry name" value="dUTPase-like"/>
    <property type="match status" value="1"/>
</dbReference>
<sequence>MNAVQVKILNPKIGTDANFPMPTRATDGSAGIDLRACIDEPITIKAGETKLIGTGMAIYIADPNYAGIILPRSGLGHKHGIVLGNLVGLIDADYQGELMVSVWNRSDTDFVLNPAERMAQYMVVPVVRPSFQVVEEFNELSARGAGGFGHSGRQ</sequence>
<reference key="1">
    <citation type="submission" date="2007-05" db="EMBL/GenBank/DDBJ databases">
        <title>Complete sequence of chromosome of Psychrobacter sp. PRwf-1.</title>
        <authorList>
            <consortium name="US DOE Joint Genome Institute"/>
            <person name="Copeland A."/>
            <person name="Lucas S."/>
            <person name="Lapidus A."/>
            <person name="Barry K."/>
            <person name="Detter J.C."/>
            <person name="Glavina del Rio T."/>
            <person name="Hammon N."/>
            <person name="Israni S."/>
            <person name="Dalin E."/>
            <person name="Tice H."/>
            <person name="Pitluck S."/>
            <person name="Chain P."/>
            <person name="Malfatti S."/>
            <person name="Shin M."/>
            <person name="Vergez L."/>
            <person name="Schmutz J."/>
            <person name="Larimer F."/>
            <person name="Land M."/>
            <person name="Hauser L."/>
            <person name="Kyrpides N."/>
            <person name="Kim E."/>
            <person name="Tiedje J."/>
            <person name="Richardson P."/>
        </authorList>
    </citation>
    <scope>NUCLEOTIDE SEQUENCE [LARGE SCALE GENOMIC DNA]</scope>
    <source>
        <strain>PRwf-1</strain>
    </source>
</reference>
<protein>
    <recommendedName>
        <fullName evidence="1">Deoxyuridine 5'-triphosphate nucleotidohydrolase</fullName>
        <shortName evidence="1">dUTPase</shortName>
        <ecNumber evidence="1">3.6.1.23</ecNumber>
    </recommendedName>
    <alternativeName>
        <fullName evidence="1">dUTP pyrophosphatase</fullName>
    </alternativeName>
</protein>
<proteinExistence type="inferred from homology"/>